<evidence type="ECO:0000250" key="1">
    <source>
        <dbReference type="UniProtKB" id="I1RNL0"/>
    </source>
</evidence>
<evidence type="ECO:0000250" key="2">
    <source>
        <dbReference type="UniProtKB" id="P9WPB7"/>
    </source>
</evidence>
<evidence type="ECO:0000255" key="3"/>
<evidence type="ECO:0000255" key="4">
    <source>
        <dbReference type="PROSITE-ProRule" id="PRU00498"/>
    </source>
</evidence>
<evidence type="ECO:0000269" key="5">
    <source>
    </source>
</evidence>
<evidence type="ECO:0000303" key="6">
    <source>
    </source>
</evidence>
<evidence type="ECO:0000305" key="7"/>
<name>SMTB_EMENI</name>
<comment type="function">
    <text evidence="1 5">Catalyzes methylation of the sphingoid base component of glucosylceramides (GluCers) at the C9-position (PubMed:27479571). Sphingolipid C9-methylation requires 4,8-desaturated ceramides as substrates (By similarity). Glucosylceramides play important roles in growth, differentiation and pathogenicity (PubMed:27479571). The methyl group at the C9-position distinguishes fungal glucosylceramides from those of plants and animals and may thus play a role in host-pathogen interactions enabling the host to recognize the fungal attack and initiate specific defense responses (By similarity).</text>
</comment>
<comment type="catalytic activity">
    <reaction evidence="1">
        <text>a (4E,8E)-4-sphinga-4,8-dienine ceramide + S-adenosyl-L-methionine = a 9-methyl-(4E,8E)-sphinga-4,8-dienine ceramide + S-adenosyl-L-homocysteine + H(+)</text>
        <dbReference type="Rhea" id="RHEA:46804"/>
        <dbReference type="ChEBI" id="CHEBI:15378"/>
        <dbReference type="ChEBI" id="CHEBI:57856"/>
        <dbReference type="ChEBI" id="CHEBI:59789"/>
        <dbReference type="ChEBI" id="CHEBI:85953"/>
        <dbReference type="ChEBI" id="CHEBI:87033"/>
        <dbReference type="EC" id="2.1.1.317"/>
    </reaction>
    <physiologicalReaction direction="left-to-right" evidence="1">
        <dbReference type="Rhea" id="RHEA:46805"/>
    </physiologicalReaction>
</comment>
<comment type="pathway">
    <text evidence="5">Lipid metabolism; sphingolipid metabolism.</text>
</comment>
<comment type="subcellular location">
    <subcellularLocation>
        <location evidence="3">Membrane</location>
        <topology evidence="3">Multi-pass membrane protein</topology>
    </subcellularLocation>
</comment>
<comment type="disruption phenotype">
    <text evidence="5">Leads to increased resistance to cell-wall-damaging agents, such as calcofluor white (CFW) and Congo red (CR) (PubMed:27479571). Accumulates unmethylated glucosylceramides (PubMed:27479571).</text>
</comment>
<comment type="similarity">
    <text evidence="7">Belongs to the CFA/CMAS family.</text>
</comment>
<dbReference type="EC" id="2.1.1.317" evidence="1"/>
<dbReference type="EMBL" id="AACD01000128">
    <property type="protein sequence ID" value="EAA61746.1"/>
    <property type="molecule type" value="Genomic_DNA"/>
</dbReference>
<dbReference type="EMBL" id="BN001304">
    <property type="protein sequence ID" value="CBF78509.1"/>
    <property type="molecule type" value="Genomic_DNA"/>
</dbReference>
<dbReference type="RefSeq" id="XP_680644.1">
    <property type="nucleotide sequence ID" value="XM_675552.1"/>
</dbReference>
<dbReference type="SMR" id="A0A1U8QNM5"/>
<dbReference type="STRING" id="227321.Q5AWF5"/>
<dbReference type="EnsemblFungi" id="CBF78509">
    <property type="protein sequence ID" value="CBF78509"/>
    <property type="gene ID" value="ANIA_07375"/>
</dbReference>
<dbReference type="GeneID" id="2870035"/>
<dbReference type="KEGG" id="ani:ANIA_07375"/>
<dbReference type="VEuPathDB" id="FungiDB:AN7375"/>
<dbReference type="eggNOG" id="ENOG502QS47">
    <property type="taxonomic scope" value="Eukaryota"/>
</dbReference>
<dbReference type="HOGENOM" id="CLU_026434_5_0_1"/>
<dbReference type="OMA" id="QRWYRIW"/>
<dbReference type="OrthoDB" id="412182at2759"/>
<dbReference type="BRENDA" id="2.1.1.317">
    <property type="organism ID" value="517"/>
</dbReference>
<dbReference type="UniPathway" id="UPA00222"/>
<dbReference type="Proteomes" id="UP000000560">
    <property type="component" value="Chromosome IV"/>
</dbReference>
<dbReference type="GO" id="GO:0016020">
    <property type="term" value="C:membrane"/>
    <property type="evidence" value="ECO:0007669"/>
    <property type="project" value="UniProtKB-SubCell"/>
</dbReference>
<dbReference type="GO" id="GO:0008168">
    <property type="term" value="F:methyltransferase activity"/>
    <property type="evidence" value="ECO:0000318"/>
    <property type="project" value="GO_Central"/>
</dbReference>
<dbReference type="GO" id="GO:0006679">
    <property type="term" value="P:glucosylceramide biosynthetic process"/>
    <property type="evidence" value="ECO:0000318"/>
    <property type="project" value="GO_Central"/>
</dbReference>
<dbReference type="GO" id="GO:0032259">
    <property type="term" value="P:methylation"/>
    <property type="evidence" value="ECO:0007669"/>
    <property type="project" value="UniProtKB-KW"/>
</dbReference>
<dbReference type="CDD" id="cd02440">
    <property type="entry name" value="AdoMet_MTases"/>
    <property type="match status" value="1"/>
</dbReference>
<dbReference type="Gene3D" id="3.40.50.150">
    <property type="entry name" value="Vaccinia Virus protein VP39"/>
    <property type="match status" value="1"/>
</dbReference>
<dbReference type="InterPro" id="IPR029063">
    <property type="entry name" value="SAM-dependent_MTases_sf"/>
</dbReference>
<dbReference type="InterPro" id="IPR052290">
    <property type="entry name" value="Sphingo_C9-MT"/>
</dbReference>
<dbReference type="PANTHER" id="PTHR45197:SF1">
    <property type="entry name" value="SPHINGOLIPID C9-METHYLTRANSFERASE A-RELATED"/>
    <property type="match status" value="1"/>
</dbReference>
<dbReference type="PANTHER" id="PTHR45197">
    <property type="entry name" value="SYNTHASE, PUTATIVE (AFU_ORTHOLOGUE AFUA_7G04190)-RELATED"/>
    <property type="match status" value="1"/>
</dbReference>
<dbReference type="Pfam" id="PF02353">
    <property type="entry name" value="CMAS"/>
    <property type="match status" value="1"/>
</dbReference>
<dbReference type="SUPFAM" id="SSF53335">
    <property type="entry name" value="S-adenosyl-L-methionine-dependent methyltransferases"/>
    <property type="match status" value="1"/>
</dbReference>
<accession>A0A1U8QNM5</accession>
<accession>C8VCH1</accession>
<accession>Q5AWF5</accession>
<feature type="chain" id="PRO_0000457168" description="Sphingolipid C9-methyltransferase B">
    <location>
        <begin position="1"/>
        <end position="510"/>
    </location>
</feature>
<feature type="transmembrane region" description="Helical" evidence="3">
    <location>
        <begin position="62"/>
        <end position="82"/>
    </location>
</feature>
<feature type="transmembrane region" description="Helical" evidence="3">
    <location>
        <begin position="84"/>
        <end position="104"/>
    </location>
</feature>
<feature type="binding site" evidence="2">
    <location>
        <begin position="227"/>
        <end position="228"/>
    </location>
    <ligand>
        <name>S-adenosyl-L-methionine</name>
        <dbReference type="ChEBI" id="CHEBI:59789"/>
    </ligand>
</feature>
<feature type="binding site" evidence="2">
    <location>
        <begin position="264"/>
        <end position="272"/>
    </location>
    <ligand>
        <name>S-adenosyl-L-methionine</name>
        <dbReference type="ChEBI" id="CHEBI:59789"/>
    </ligand>
</feature>
<feature type="binding site" evidence="2">
    <location>
        <begin position="290"/>
        <end position="295"/>
    </location>
    <ligand>
        <name>S-adenosyl-L-methionine</name>
        <dbReference type="ChEBI" id="CHEBI:59789"/>
    </ligand>
</feature>
<feature type="binding site" evidence="2">
    <location>
        <begin position="320"/>
        <end position="321"/>
    </location>
    <ligand>
        <name>S-adenosyl-L-methionine</name>
        <dbReference type="ChEBI" id="CHEBI:59789"/>
    </ligand>
</feature>
<feature type="glycosylation site" description="N-linked (GlcNAc...) asparagine" evidence="4">
    <location>
        <position position="55"/>
    </location>
</feature>
<feature type="glycosylation site" description="N-linked (GlcNAc...) asparagine" evidence="4">
    <location>
        <position position="175"/>
    </location>
</feature>
<feature type="glycosylation site" description="N-linked (GlcNAc...) asparagine" evidence="4">
    <location>
        <position position="294"/>
    </location>
</feature>
<sequence length="510" mass="57750">MSEEKKSVELSGDIDFIETPPAKASQFETGEDCGIEVTKAAAIPNPPLAVDGPGNESFSNYLLGGTLVGLPAFLTWFFGGGAKTFVFFFLLSVLPVLVAFWTYASTFSPRTNEKVKLPGRPVEHYITFKREEDKAKWHGKNKIPMQTFAEMYLDGLVDFNGDTLDVMEYRHDWANFSFTWDLFKFIVGTFFVDVLFHTKAQDEEQVRPNYDSGNDHYAWFLGPRMIYTSGIISDPEKEETLEEMQDNKMAIVCEKIGLKEGETMLDIGCGWGTLARFASLNYGAKVTGLTIAENQTAWGNDALRKAGIPEEQSKILCMDYRDAPRTKFDKITQLEMGEHVGIRRLTGFFRQCYDMLKDDGAMYVQLSGLRQAWQYEDFIWGLYLNKYIFRGADASTPLWYYVKCLEQAGFEVKGIDTVGVHYSGTLWRWYRNWVGNVEAIKAKYGPRWYRIWELFLAWSVIASRQGSATCYQMVVVKNLNSTHRINGVASQFGLAGALAASRAAGKSRLP</sequence>
<reference key="1">
    <citation type="journal article" date="2005" name="Nature">
        <title>Sequencing of Aspergillus nidulans and comparative analysis with A. fumigatus and A. oryzae.</title>
        <authorList>
            <person name="Galagan J.E."/>
            <person name="Calvo S.E."/>
            <person name="Cuomo C."/>
            <person name="Ma L.-J."/>
            <person name="Wortman J.R."/>
            <person name="Batzoglou S."/>
            <person name="Lee S.-I."/>
            <person name="Bastuerkmen M."/>
            <person name="Spevak C.C."/>
            <person name="Clutterbuck J."/>
            <person name="Kapitonov V."/>
            <person name="Jurka J."/>
            <person name="Scazzocchio C."/>
            <person name="Farman M.L."/>
            <person name="Butler J."/>
            <person name="Purcell S."/>
            <person name="Harris S."/>
            <person name="Braus G.H."/>
            <person name="Draht O."/>
            <person name="Busch S."/>
            <person name="D'Enfert C."/>
            <person name="Bouchier C."/>
            <person name="Goldman G.H."/>
            <person name="Bell-Pedersen D."/>
            <person name="Griffiths-Jones S."/>
            <person name="Doonan J.H."/>
            <person name="Yu J."/>
            <person name="Vienken K."/>
            <person name="Pain A."/>
            <person name="Freitag M."/>
            <person name="Selker E.U."/>
            <person name="Archer D.B."/>
            <person name="Penalva M.A."/>
            <person name="Oakley B.R."/>
            <person name="Momany M."/>
            <person name="Tanaka T."/>
            <person name="Kumagai T."/>
            <person name="Asai K."/>
            <person name="Machida M."/>
            <person name="Nierman W.C."/>
            <person name="Denning D.W."/>
            <person name="Caddick M.X."/>
            <person name="Hynes M."/>
            <person name="Paoletti M."/>
            <person name="Fischer R."/>
            <person name="Miller B.L."/>
            <person name="Dyer P.S."/>
            <person name="Sachs M.S."/>
            <person name="Osmani S.A."/>
            <person name="Birren B.W."/>
        </authorList>
    </citation>
    <scope>NUCLEOTIDE SEQUENCE [LARGE SCALE GENOMIC DNA]</scope>
    <source>
        <strain>FGSC A4 / ATCC 38163 / CBS 112.46 / NRRL 194 / M139</strain>
    </source>
</reference>
<reference key="2">
    <citation type="journal article" date="2009" name="Fungal Genet. Biol.">
        <title>The 2008 update of the Aspergillus nidulans genome annotation: a community effort.</title>
        <authorList>
            <person name="Wortman J.R."/>
            <person name="Gilsenan J.M."/>
            <person name="Joardar V."/>
            <person name="Deegan J."/>
            <person name="Clutterbuck J."/>
            <person name="Andersen M.R."/>
            <person name="Archer D."/>
            <person name="Bencina M."/>
            <person name="Braus G."/>
            <person name="Coutinho P."/>
            <person name="von Dohren H."/>
            <person name="Doonan J."/>
            <person name="Driessen A.J."/>
            <person name="Durek P."/>
            <person name="Espeso E."/>
            <person name="Fekete E."/>
            <person name="Flipphi M."/>
            <person name="Estrada C.G."/>
            <person name="Geysens S."/>
            <person name="Goldman G."/>
            <person name="de Groot P.W."/>
            <person name="Hansen K."/>
            <person name="Harris S.D."/>
            <person name="Heinekamp T."/>
            <person name="Helmstaedt K."/>
            <person name="Henrissat B."/>
            <person name="Hofmann G."/>
            <person name="Homan T."/>
            <person name="Horio T."/>
            <person name="Horiuchi H."/>
            <person name="James S."/>
            <person name="Jones M."/>
            <person name="Karaffa L."/>
            <person name="Karanyi Z."/>
            <person name="Kato M."/>
            <person name="Keller N."/>
            <person name="Kelly D.E."/>
            <person name="Kiel J.A."/>
            <person name="Kim J.M."/>
            <person name="van der Klei I.J."/>
            <person name="Klis F.M."/>
            <person name="Kovalchuk A."/>
            <person name="Krasevec N."/>
            <person name="Kubicek C.P."/>
            <person name="Liu B."/>
            <person name="Maccabe A."/>
            <person name="Meyer V."/>
            <person name="Mirabito P."/>
            <person name="Miskei M."/>
            <person name="Mos M."/>
            <person name="Mullins J."/>
            <person name="Nelson D.R."/>
            <person name="Nielsen J."/>
            <person name="Oakley B.R."/>
            <person name="Osmani S.A."/>
            <person name="Pakula T."/>
            <person name="Paszewski A."/>
            <person name="Paulsen I."/>
            <person name="Pilsyk S."/>
            <person name="Pocsi I."/>
            <person name="Punt P.J."/>
            <person name="Ram A.F."/>
            <person name="Ren Q."/>
            <person name="Robellet X."/>
            <person name="Robson G."/>
            <person name="Seiboth B."/>
            <person name="van Solingen P."/>
            <person name="Specht T."/>
            <person name="Sun J."/>
            <person name="Taheri-Talesh N."/>
            <person name="Takeshita N."/>
            <person name="Ussery D."/>
            <person name="vanKuyk P.A."/>
            <person name="Visser H."/>
            <person name="van de Vondervoort P.J."/>
            <person name="de Vries R.P."/>
            <person name="Walton J."/>
            <person name="Xiang X."/>
            <person name="Xiong Y."/>
            <person name="Zeng A.P."/>
            <person name="Brandt B.W."/>
            <person name="Cornell M.J."/>
            <person name="van den Hondel C.A."/>
            <person name="Visser J."/>
            <person name="Oliver S.G."/>
            <person name="Turner G."/>
        </authorList>
    </citation>
    <scope>GENOME REANNOTATION</scope>
    <source>
        <strain>FGSC A4 / ATCC 38163 / CBS 112.46 / NRRL 194 / M139</strain>
    </source>
</reference>
<reference key="3">
    <citation type="journal article" date="2016" name="Mol. Microbiol.">
        <title>Functional characterization of the Aspergillus nidulans glucosylceramide pathway reveals that LCB Delta8-desaturation and C9-methylation are relevant to filamentous growth, lipid raft localization and Psd1 defensin activity.</title>
        <authorList>
            <person name="Fernandes C.M."/>
            <person name="de Castro P.A."/>
            <person name="Singh A."/>
            <person name="Fonseca F.L."/>
            <person name="Pereira M.D."/>
            <person name="Vila T.V."/>
            <person name="Atella G.C."/>
            <person name="Rozental S."/>
            <person name="Savoldi M."/>
            <person name="Del Poeta M."/>
            <person name="Goldman G.H."/>
            <person name="Kurtenbach E."/>
        </authorList>
    </citation>
    <scope>FUNCTION</scope>
    <scope>PATHWAY</scope>
    <scope>DISRUPTION PHENOTYPE</scope>
</reference>
<proteinExistence type="inferred from homology"/>
<gene>
    <name evidence="6" type="primary">smtB</name>
    <name type="ORF">AN7375</name>
    <name type="ORF">ANIA_07375</name>
</gene>
<protein>
    <recommendedName>
        <fullName evidence="6">Sphingolipid C9-methyltransferase B</fullName>
        <ecNumber evidence="1">2.1.1.317</ecNumber>
    </recommendedName>
</protein>
<organism>
    <name type="scientific">Emericella nidulans (strain FGSC A4 / ATCC 38163 / CBS 112.46 / NRRL 194 / M139)</name>
    <name type="common">Aspergillus nidulans</name>
    <dbReference type="NCBI Taxonomy" id="227321"/>
    <lineage>
        <taxon>Eukaryota</taxon>
        <taxon>Fungi</taxon>
        <taxon>Dikarya</taxon>
        <taxon>Ascomycota</taxon>
        <taxon>Pezizomycotina</taxon>
        <taxon>Eurotiomycetes</taxon>
        <taxon>Eurotiomycetidae</taxon>
        <taxon>Eurotiales</taxon>
        <taxon>Aspergillaceae</taxon>
        <taxon>Aspergillus</taxon>
        <taxon>Aspergillus subgen. Nidulantes</taxon>
    </lineage>
</organism>
<keyword id="KW-0325">Glycoprotein</keyword>
<keyword id="KW-0444">Lipid biosynthesis</keyword>
<keyword id="KW-0443">Lipid metabolism</keyword>
<keyword id="KW-0472">Membrane</keyword>
<keyword id="KW-0489">Methyltransferase</keyword>
<keyword id="KW-1185">Reference proteome</keyword>
<keyword id="KW-0949">S-adenosyl-L-methionine</keyword>
<keyword id="KW-0746">Sphingolipid metabolism</keyword>
<keyword id="KW-0808">Transferase</keyword>
<keyword id="KW-0812">Transmembrane</keyword>
<keyword id="KW-1133">Transmembrane helix</keyword>